<name>CAIT_ECO55</name>
<proteinExistence type="inferred from homology"/>
<evidence type="ECO:0000255" key="1">
    <source>
        <dbReference type="HAMAP-Rule" id="MF_01049"/>
    </source>
</evidence>
<organism>
    <name type="scientific">Escherichia coli (strain 55989 / EAEC)</name>
    <dbReference type="NCBI Taxonomy" id="585055"/>
    <lineage>
        <taxon>Bacteria</taxon>
        <taxon>Pseudomonadati</taxon>
        <taxon>Pseudomonadota</taxon>
        <taxon>Gammaproteobacteria</taxon>
        <taxon>Enterobacterales</taxon>
        <taxon>Enterobacteriaceae</taxon>
        <taxon>Escherichia</taxon>
    </lineage>
</organism>
<reference key="1">
    <citation type="journal article" date="2009" name="PLoS Genet.">
        <title>Organised genome dynamics in the Escherichia coli species results in highly diverse adaptive paths.</title>
        <authorList>
            <person name="Touchon M."/>
            <person name="Hoede C."/>
            <person name="Tenaillon O."/>
            <person name="Barbe V."/>
            <person name="Baeriswyl S."/>
            <person name="Bidet P."/>
            <person name="Bingen E."/>
            <person name="Bonacorsi S."/>
            <person name="Bouchier C."/>
            <person name="Bouvet O."/>
            <person name="Calteau A."/>
            <person name="Chiapello H."/>
            <person name="Clermont O."/>
            <person name="Cruveiller S."/>
            <person name="Danchin A."/>
            <person name="Diard M."/>
            <person name="Dossat C."/>
            <person name="Karoui M.E."/>
            <person name="Frapy E."/>
            <person name="Garry L."/>
            <person name="Ghigo J.M."/>
            <person name="Gilles A.M."/>
            <person name="Johnson J."/>
            <person name="Le Bouguenec C."/>
            <person name="Lescat M."/>
            <person name="Mangenot S."/>
            <person name="Martinez-Jehanne V."/>
            <person name="Matic I."/>
            <person name="Nassif X."/>
            <person name="Oztas S."/>
            <person name="Petit M.A."/>
            <person name="Pichon C."/>
            <person name="Rouy Z."/>
            <person name="Ruf C.S."/>
            <person name="Schneider D."/>
            <person name="Tourret J."/>
            <person name="Vacherie B."/>
            <person name="Vallenet D."/>
            <person name="Medigue C."/>
            <person name="Rocha E.P.C."/>
            <person name="Denamur E."/>
        </authorList>
    </citation>
    <scope>NUCLEOTIDE SEQUENCE [LARGE SCALE GENOMIC DNA]</scope>
    <source>
        <strain>55989 / EAEC</strain>
    </source>
</reference>
<accession>B7L4G3</accession>
<feature type="chain" id="PRO_1000149619" description="L-carnitine/gamma-butyrobetaine antiporter">
    <location>
        <begin position="1"/>
        <end position="504"/>
    </location>
</feature>
<feature type="transmembrane region" description="Helical" evidence="1">
    <location>
        <begin position="10"/>
        <end position="30"/>
    </location>
</feature>
<feature type="transmembrane region" description="Helical" evidence="1">
    <location>
        <begin position="51"/>
        <end position="71"/>
    </location>
</feature>
<feature type="transmembrane region" description="Helical" evidence="1">
    <location>
        <begin position="92"/>
        <end position="112"/>
    </location>
</feature>
<feature type="transmembrane region" description="Helical" evidence="1">
    <location>
        <begin position="143"/>
        <end position="163"/>
    </location>
</feature>
<feature type="transmembrane region" description="Helical" evidence="1">
    <location>
        <begin position="195"/>
        <end position="215"/>
    </location>
</feature>
<feature type="transmembrane region" description="Helical" evidence="1">
    <location>
        <begin position="231"/>
        <end position="251"/>
    </location>
</feature>
<feature type="transmembrane region" description="Helical" evidence="1">
    <location>
        <begin position="263"/>
        <end position="283"/>
    </location>
</feature>
<feature type="transmembrane region" description="Helical" evidence="1">
    <location>
        <begin position="316"/>
        <end position="336"/>
    </location>
</feature>
<feature type="transmembrane region" description="Helical" evidence="1">
    <location>
        <begin position="347"/>
        <end position="367"/>
    </location>
</feature>
<feature type="transmembrane region" description="Helical" evidence="1">
    <location>
        <begin position="398"/>
        <end position="418"/>
    </location>
</feature>
<feature type="transmembrane region" description="Helical" evidence="1">
    <location>
        <begin position="446"/>
        <end position="466"/>
    </location>
</feature>
<feature type="transmembrane region" description="Helical" evidence="1">
    <location>
        <begin position="475"/>
        <end position="495"/>
    </location>
</feature>
<comment type="function">
    <text evidence="1">Catalyzes the exchange of L-carnitine for gamma-butyrobetaine.</text>
</comment>
<comment type="catalytic activity">
    <reaction evidence="1">
        <text>4-(trimethylamino)butanoate(in) + (R)-carnitine(out) = 4-(trimethylamino)butanoate(out) + (R)-carnitine(in)</text>
        <dbReference type="Rhea" id="RHEA:29427"/>
        <dbReference type="ChEBI" id="CHEBI:16244"/>
        <dbReference type="ChEBI" id="CHEBI:16347"/>
    </reaction>
</comment>
<comment type="pathway">
    <text evidence="1">Amine and polyamine metabolism; carnitine metabolism.</text>
</comment>
<comment type="subunit">
    <text evidence="1">Homotrimer.</text>
</comment>
<comment type="subcellular location">
    <subcellularLocation>
        <location evidence="1">Cell inner membrane</location>
        <topology evidence="1">Multi-pass membrane protein</topology>
    </subcellularLocation>
</comment>
<comment type="similarity">
    <text evidence="1">Belongs to the BCCT transporter (TC 2.A.15) family. CaiT subfamily.</text>
</comment>
<keyword id="KW-0050">Antiport</keyword>
<keyword id="KW-0997">Cell inner membrane</keyword>
<keyword id="KW-1003">Cell membrane</keyword>
<keyword id="KW-0472">Membrane</keyword>
<keyword id="KW-1185">Reference proteome</keyword>
<keyword id="KW-0812">Transmembrane</keyword>
<keyword id="KW-1133">Transmembrane helix</keyword>
<keyword id="KW-0813">Transport</keyword>
<sequence>MKNEKRKTGIEPKVFFPPLIIVGILCWLTVRDLDAANVVINAVFSYVTNVWGWAFEWYMVVMLFGWFWLVFGPYAKKRLGNEPPEFSTASWIFMMFASCTSAAVLFWGSIEIYYYISTPPFGLEPNSTGAKELGLAYSLFHWGPLPWATYSFLSVAFAYFFFVRKMEVIRPSSTLVPLVGEKHAKGLFGTIVDNFYLVALIFAMGTSLGLATPLVTECMQWLFGIPHTLQLDAIIITCWIILNAICVACGLQKGVRIASDVRSYLSFLMLGWVFIVSGASFIMNYFTDSVGMLLMYLPRMLFYTDPIAKGGFPQGWTVFYWAWWVIYAIQMSIFLARISRGRTVRELCFGMVLGLTASTWILWTVLGSNTLLLIDKNIINIPNLIEQYGVARAIIETWAALPLSTATMWGFFILCFIATVTLVNACSYTLAMSTCREVRDGEEPPLLVRIGWSILVGIIGIVLLALGGLKPIQTAIIAGGCPLFFVNIMVTLSFIKDAKQNWKD</sequence>
<protein>
    <recommendedName>
        <fullName evidence="1">L-carnitine/gamma-butyrobetaine antiporter</fullName>
    </recommendedName>
</protein>
<dbReference type="EMBL" id="CU928145">
    <property type="protein sequence ID" value="CAU95927.1"/>
    <property type="molecule type" value="Genomic_DNA"/>
</dbReference>
<dbReference type="RefSeq" id="WP_000787103.1">
    <property type="nucleotide sequence ID" value="NC_011748.1"/>
</dbReference>
<dbReference type="SMR" id="B7L4G3"/>
<dbReference type="GeneID" id="93777395"/>
<dbReference type="KEGG" id="eck:EC55989_0040"/>
<dbReference type="HOGENOM" id="CLU_010118_6_0_6"/>
<dbReference type="UniPathway" id="UPA00117"/>
<dbReference type="Proteomes" id="UP000000746">
    <property type="component" value="Chromosome"/>
</dbReference>
<dbReference type="GO" id="GO:0005886">
    <property type="term" value="C:plasma membrane"/>
    <property type="evidence" value="ECO:0007669"/>
    <property type="project" value="UniProtKB-SubCell"/>
</dbReference>
<dbReference type="GO" id="GO:0044667">
    <property type="term" value="F:(R)-carnitine:4-(trimethylammonio)butanoate antiporter activity"/>
    <property type="evidence" value="ECO:0007669"/>
    <property type="project" value="UniProtKB-UniRule"/>
</dbReference>
<dbReference type="GO" id="GO:1900751">
    <property type="term" value="P:4-(trimethylammonio)butanoate transport"/>
    <property type="evidence" value="ECO:0007669"/>
    <property type="project" value="InterPro"/>
</dbReference>
<dbReference type="GO" id="GO:0009437">
    <property type="term" value="P:carnitine metabolic process"/>
    <property type="evidence" value="ECO:0007669"/>
    <property type="project" value="UniProtKB-UniRule"/>
</dbReference>
<dbReference type="HAMAP" id="MF_01049">
    <property type="entry name" value="CaiT"/>
    <property type="match status" value="1"/>
</dbReference>
<dbReference type="InterPro" id="IPR018093">
    <property type="entry name" value="BCCT_CS"/>
</dbReference>
<dbReference type="InterPro" id="IPR000060">
    <property type="entry name" value="BCCT_transptr"/>
</dbReference>
<dbReference type="InterPro" id="IPR023449">
    <property type="entry name" value="BCCT_transptr_CaiT"/>
</dbReference>
<dbReference type="NCBIfam" id="TIGR00842">
    <property type="entry name" value="bcct"/>
    <property type="match status" value="1"/>
</dbReference>
<dbReference type="NCBIfam" id="NF002887">
    <property type="entry name" value="PRK03356.1"/>
    <property type="match status" value="1"/>
</dbReference>
<dbReference type="PANTHER" id="PTHR30047">
    <property type="entry name" value="HIGH-AFFINITY CHOLINE TRANSPORT PROTEIN-RELATED"/>
    <property type="match status" value="1"/>
</dbReference>
<dbReference type="PANTHER" id="PTHR30047:SF11">
    <property type="entry name" value="L-CARNITINE_GAMMA-BUTYROBETAINE ANTIPORTER"/>
    <property type="match status" value="1"/>
</dbReference>
<dbReference type="Pfam" id="PF02028">
    <property type="entry name" value="BCCT"/>
    <property type="match status" value="1"/>
</dbReference>
<dbReference type="PROSITE" id="PS01303">
    <property type="entry name" value="BCCT"/>
    <property type="match status" value="1"/>
</dbReference>
<gene>
    <name evidence="1" type="primary">caiT</name>
    <name type="ordered locus">EC55989_0040</name>
</gene>